<evidence type="ECO:0000255" key="1"/>
<evidence type="ECO:0000256" key="2">
    <source>
        <dbReference type="SAM" id="MobiDB-lite"/>
    </source>
</evidence>
<evidence type="ECO:0000305" key="3"/>
<feature type="signal peptide" evidence="1">
    <location>
        <begin position="1"/>
        <end position="18"/>
    </location>
</feature>
<feature type="chain" id="PRO_0000348165" description="Putative uncharacterized protein DDB_G0271974">
    <location>
        <begin position="19"/>
        <end position="69"/>
    </location>
</feature>
<feature type="region of interest" description="Disordered" evidence="2">
    <location>
        <begin position="17"/>
        <end position="69"/>
    </location>
</feature>
<feature type="compositionally biased region" description="Low complexity" evidence="2">
    <location>
        <begin position="18"/>
        <end position="61"/>
    </location>
</feature>
<comment type="subcellular location">
    <subcellularLocation>
        <location evidence="3">Secreted</location>
    </subcellularLocation>
</comment>
<keyword id="KW-1185">Reference proteome</keyword>
<keyword id="KW-0964">Secreted</keyword>
<keyword id="KW-0732">Signal</keyword>
<dbReference type="EMBL" id="AAFI02000007">
    <property type="protein sequence ID" value="EAL71421.1"/>
    <property type="molecule type" value="Genomic_DNA"/>
</dbReference>
<dbReference type="RefSeq" id="XP_645349.1">
    <property type="nucleotide sequence ID" value="XM_640257.1"/>
</dbReference>
<dbReference type="PaxDb" id="44689-DDB0168587"/>
<dbReference type="EnsemblProtists" id="EAL71421">
    <property type="protein sequence ID" value="EAL71421"/>
    <property type="gene ID" value="DDB_G0271974"/>
</dbReference>
<dbReference type="GeneID" id="8618237"/>
<dbReference type="KEGG" id="ddi:DDB_G0271974"/>
<dbReference type="HOGENOM" id="CLU_2781197_0_0_1"/>
<dbReference type="InParanoid" id="Q86JP8"/>
<dbReference type="OMA" id="MAMLWIS"/>
<dbReference type="PRO" id="PR:Q86JP8"/>
<dbReference type="Proteomes" id="UP000002195">
    <property type="component" value="Chromosome 2"/>
</dbReference>
<dbReference type="GO" id="GO:0005576">
    <property type="term" value="C:extracellular region"/>
    <property type="evidence" value="ECO:0007669"/>
    <property type="project" value="UniProtKB-SubCell"/>
</dbReference>
<proteinExistence type="inferred from homology"/>
<gene>
    <name type="ORF">DDB_G0271974</name>
</gene>
<organism>
    <name type="scientific">Dictyostelium discoideum</name>
    <name type="common">Social amoeba</name>
    <dbReference type="NCBI Taxonomy" id="44689"/>
    <lineage>
        <taxon>Eukaryota</taxon>
        <taxon>Amoebozoa</taxon>
        <taxon>Evosea</taxon>
        <taxon>Eumycetozoa</taxon>
        <taxon>Dictyostelia</taxon>
        <taxon>Dictyosteliales</taxon>
        <taxon>Dictyosteliaceae</taxon>
        <taxon>Dictyostelium</taxon>
    </lineage>
</organism>
<name>Y8587_DICDI</name>
<sequence length="69" mass="6817">MAMLWISMFIIMRKYGRSSSSSSSSSSSSSSSSSSSSSSSSSSSSSSSSSSSSSSSSGSSSNSNRVVVV</sequence>
<protein>
    <recommendedName>
        <fullName>Putative uncharacterized protein DDB_G0271974</fullName>
    </recommendedName>
</protein>
<accession>Q86JP8</accession>
<accession>Q55AB7</accession>
<reference key="1">
    <citation type="journal article" date="2002" name="Nature">
        <title>Sequence and analysis of chromosome 2 of Dictyostelium discoideum.</title>
        <authorList>
            <person name="Gloeckner G."/>
            <person name="Eichinger L."/>
            <person name="Szafranski K."/>
            <person name="Pachebat J.A."/>
            <person name="Bankier A.T."/>
            <person name="Dear P.H."/>
            <person name="Lehmann R."/>
            <person name="Baumgart C."/>
            <person name="Parra G."/>
            <person name="Abril J.F."/>
            <person name="Guigo R."/>
            <person name="Kumpf K."/>
            <person name="Tunggal B."/>
            <person name="Cox E.C."/>
            <person name="Quail M.A."/>
            <person name="Platzer M."/>
            <person name="Rosenthal A."/>
            <person name="Noegel A.A."/>
        </authorList>
    </citation>
    <scope>NUCLEOTIDE SEQUENCE [LARGE SCALE GENOMIC DNA]</scope>
    <source>
        <strain>AX4</strain>
    </source>
</reference>
<reference key="2">
    <citation type="journal article" date="2005" name="Nature">
        <title>The genome of the social amoeba Dictyostelium discoideum.</title>
        <authorList>
            <person name="Eichinger L."/>
            <person name="Pachebat J.A."/>
            <person name="Gloeckner G."/>
            <person name="Rajandream M.A."/>
            <person name="Sucgang R."/>
            <person name="Berriman M."/>
            <person name="Song J."/>
            <person name="Olsen R."/>
            <person name="Szafranski K."/>
            <person name="Xu Q."/>
            <person name="Tunggal B."/>
            <person name="Kummerfeld S."/>
            <person name="Madera M."/>
            <person name="Konfortov B.A."/>
            <person name="Rivero F."/>
            <person name="Bankier A.T."/>
            <person name="Lehmann R."/>
            <person name="Hamlin N."/>
            <person name="Davies R."/>
            <person name="Gaudet P."/>
            <person name="Fey P."/>
            <person name="Pilcher K."/>
            <person name="Chen G."/>
            <person name="Saunders D."/>
            <person name="Sodergren E.J."/>
            <person name="Davis P."/>
            <person name="Kerhornou A."/>
            <person name="Nie X."/>
            <person name="Hall N."/>
            <person name="Anjard C."/>
            <person name="Hemphill L."/>
            <person name="Bason N."/>
            <person name="Farbrother P."/>
            <person name="Desany B."/>
            <person name="Just E."/>
            <person name="Morio T."/>
            <person name="Rost R."/>
            <person name="Churcher C.M."/>
            <person name="Cooper J."/>
            <person name="Haydock S."/>
            <person name="van Driessche N."/>
            <person name="Cronin A."/>
            <person name="Goodhead I."/>
            <person name="Muzny D.M."/>
            <person name="Mourier T."/>
            <person name="Pain A."/>
            <person name="Lu M."/>
            <person name="Harper D."/>
            <person name="Lindsay R."/>
            <person name="Hauser H."/>
            <person name="James K.D."/>
            <person name="Quiles M."/>
            <person name="Madan Babu M."/>
            <person name="Saito T."/>
            <person name="Buchrieser C."/>
            <person name="Wardroper A."/>
            <person name="Felder M."/>
            <person name="Thangavelu M."/>
            <person name="Johnson D."/>
            <person name="Knights A."/>
            <person name="Loulseged H."/>
            <person name="Mungall K.L."/>
            <person name="Oliver K."/>
            <person name="Price C."/>
            <person name="Quail M.A."/>
            <person name="Urushihara H."/>
            <person name="Hernandez J."/>
            <person name="Rabbinowitsch E."/>
            <person name="Steffen D."/>
            <person name="Sanders M."/>
            <person name="Ma J."/>
            <person name="Kohara Y."/>
            <person name="Sharp S."/>
            <person name="Simmonds M.N."/>
            <person name="Spiegler S."/>
            <person name="Tivey A."/>
            <person name="Sugano S."/>
            <person name="White B."/>
            <person name="Walker D."/>
            <person name="Woodward J.R."/>
            <person name="Winckler T."/>
            <person name="Tanaka Y."/>
            <person name="Shaulsky G."/>
            <person name="Schleicher M."/>
            <person name="Weinstock G.M."/>
            <person name="Rosenthal A."/>
            <person name="Cox E.C."/>
            <person name="Chisholm R.L."/>
            <person name="Gibbs R.A."/>
            <person name="Loomis W.F."/>
            <person name="Platzer M."/>
            <person name="Kay R.R."/>
            <person name="Williams J.G."/>
            <person name="Dear P.H."/>
            <person name="Noegel A.A."/>
            <person name="Barrell B.G."/>
            <person name="Kuspa A."/>
        </authorList>
    </citation>
    <scope>NUCLEOTIDE SEQUENCE [LARGE SCALE GENOMIC DNA]</scope>
    <source>
        <strain>AX4</strain>
    </source>
</reference>